<name>ACCA_XANC8</name>
<dbReference type="EC" id="2.1.3.15" evidence="1"/>
<dbReference type="EMBL" id="CP000050">
    <property type="protein sequence ID" value="AAY49929.1"/>
    <property type="molecule type" value="Genomic_DNA"/>
</dbReference>
<dbReference type="RefSeq" id="WP_011036549.1">
    <property type="nucleotide sequence ID" value="NZ_CP155948.1"/>
</dbReference>
<dbReference type="SMR" id="Q4USP4"/>
<dbReference type="KEGG" id="xcb:XC_2881"/>
<dbReference type="HOGENOM" id="CLU_015486_0_2_6"/>
<dbReference type="UniPathway" id="UPA00655">
    <property type="reaction ID" value="UER00711"/>
</dbReference>
<dbReference type="Proteomes" id="UP000000420">
    <property type="component" value="Chromosome"/>
</dbReference>
<dbReference type="GO" id="GO:0009317">
    <property type="term" value="C:acetyl-CoA carboxylase complex"/>
    <property type="evidence" value="ECO:0007669"/>
    <property type="project" value="InterPro"/>
</dbReference>
<dbReference type="GO" id="GO:0003989">
    <property type="term" value="F:acetyl-CoA carboxylase activity"/>
    <property type="evidence" value="ECO:0007669"/>
    <property type="project" value="InterPro"/>
</dbReference>
<dbReference type="GO" id="GO:0005524">
    <property type="term" value="F:ATP binding"/>
    <property type="evidence" value="ECO:0007669"/>
    <property type="project" value="UniProtKB-KW"/>
</dbReference>
<dbReference type="GO" id="GO:0016743">
    <property type="term" value="F:carboxyl- or carbamoyltransferase activity"/>
    <property type="evidence" value="ECO:0007669"/>
    <property type="project" value="UniProtKB-UniRule"/>
</dbReference>
<dbReference type="GO" id="GO:0006633">
    <property type="term" value="P:fatty acid biosynthetic process"/>
    <property type="evidence" value="ECO:0007669"/>
    <property type="project" value="UniProtKB-KW"/>
</dbReference>
<dbReference type="GO" id="GO:2001295">
    <property type="term" value="P:malonyl-CoA biosynthetic process"/>
    <property type="evidence" value="ECO:0007669"/>
    <property type="project" value="UniProtKB-UniRule"/>
</dbReference>
<dbReference type="FunFam" id="3.90.226.10:FF:000008">
    <property type="entry name" value="Acetyl-coenzyme A carboxylase carboxyl transferase subunit alpha"/>
    <property type="match status" value="1"/>
</dbReference>
<dbReference type="Gene3D" id="3.90.226.10">
    <property type="entry name" value="2-enoyl-CoA Hydratase, Chain A, domain 1"/>
    <property type="match status" value="1"/>
</dbReference>
<dbReference type="HAMAP" id="MF_00823">
    <property type="entry name" value="AcetylCoA_CT_alpha"/>
    <property type="match status" value="1"/>
</dbReference>
<dbReference type="InterPro" id="IPR001095">
    <property type="entry name" value="Acetyl_CoA_COase_a_su"/>
</dbReference>
<dbReference type="InterPro" id="IPR029045">
    <property type="entry name" value="ClpP/crotonase-like_dom_sf"/>
</dbReference>
<dbReference type="InterPro" id="IPR011763">
    <property type="entry name" value="COA_CT_C"/>
</dbReference>
<dbReference type="NCBIfam" id="TIGR00513">
    <property type="entry name" value="accA"/>
    <property type="match status" value="1"/>
</dbReference>
<dbReference type="NCBIfam" id="NF041504">
    <property type="entry name" value="AccA_sub"/>
    <property type="match status" value="1"/>
</dbReference>
<dbReference type="NCBIfam" id="NF004344">
    <property type="entry name" value="PRK05724.1"/>
    <property type="match status" value="1"/>
</dbReference>
<dbReference type="PANTHER" id="PTHR42853">
    <property type="entry name" value="ACETYL-COENZYME A CARBOXYLASE CARBOXYL TRANSFERASE SUBUNIT ALPHA"/>
    <property type="match status" value="1"/>
</dbReference>
<dbReference type="PANTHER" id="PTHR42853:SF3">
    <property type="entry name" value="ACETYL-COENZYME A CARBOXYLASE CARBOXYL TRANSFERASE SUBUNIT ALPHA, CHLOROPLASTIC"/>
    <property type="match status" value="1"/>
</dbReference>
<dbReference type="Pfam" id="PF03255">
    <property type="entry name" value="ACCA"/>
    <property type="match status" value="1"/>
</dbReference>
<dbReference type="PRINTS" id="PR01069">
    <property type="entry name" value="ACCCTRFRASEA"/>
</dbReference>
<dbReference type="SUPFAM" id="SSF52096">
    <property type="entry name" value="ClpP/crotonase"/>
    <property type="match status" value="1"/>
</dbReference>
<dbReference type="PROSITE" id="PS50989">
    <property type="entry name" value="COA_CT_CTER"/>
    <property type="match status" value="1"/>
</dbReference>
<sequence>MNPNYLDFEQPIADLEAKIQELRKASTGPAVNVDAEVRALRDKLRVRTAQIFRDLSAWQVSQLARHPQRPYTLDYINTMCDEFQELAGDRAYADDKAIVGGLGRIDGRPVVIIGHQKGRDTKSKVARNFGMPRPEGYRKALRLMKLAERFRLPLLTFIDTPGAYPGIGAEERGQSEAIARNLMEMAELKVPVICTVIGEGGSGGALAIGVGDRTLMLEYGTYSVISPEGCASILWKDAAKAKDAAEQLGLTAKRLKGLGLVDKVIREPTGGAHRNPEQMGKRLKAVLLNELDALEKVPVDALMQQRYERLRSYGAYEGH</sequence>
<proteinExistence type="inferred from homology"/>
<feature type="chain" id="PRO_0000223856" description="Acetyl-coenzyme A carboxylase carboxyl transferase subunit alpha">
    <location>
        <begin position="1"/>
        <end position="319"/>
    </location>
</feature>
<feature type="domain" description="CoA carboxyltransferase C-terminal" evidence="2">
    <location>
        <begin position="32"/>
        <end position="293"/>
    </location>
</feature>
<gene>
    <name evidence="1" type="primary">accA</name>
    <name type="ordered locus">XC_2881</name>
</gene>
<evidence type="ECO:0000255" key="1">
    <source>
        <dbReference type="HAMAP-Rule" id="MF_00823"/>
    </source>
</evidence>
<evidence type="ECO:0000255" key="2">
    <source>
        <dbReference type="PROSITE-ProRule" id="PRU01137"/>
    </source>
</evidence>
<accession>Q4USP4</accession>
<reference key="1">
    <citation type="journal article" date="2005" name="Genome Res.">
        <title>Comparative and functional genomic analyses of the pathogenicity of phytopathogen Xanthomonas campestris pv. campestris.</title>
        <authorList>
            <person name="Qian W."/>
            <person name="Jia Y."/>
            <person name="Ren S.-X."/>
            <person name="He Y.-Q."/>
            <person name="Feng J.-X."/>
            <person name="Lu L.-F."/>
            <person name="Sun Q."/>
            <person name="Ying G."/>
            <person name="Tang D.-J."/>
            <person name="Tang H."/>
            <person name="Wu W."/>
            <person name="Hao P."/>
            <person name="Wang L."/>
            <person name="Jiang B.-L."/>
            <person name="Zeng S."/>
            <person name="Gu W.-Y."/>
            <person name="Lu G."/>
            <person name="Rong L."/>
            <person name="Tian Y."/>
            <person name="Yao Z."/>
            <person name="Fu G."/>
            <person name="Chen B."/>
            <person name="Fang R."/>
            <person name="Qiang B."/>
            <person name="Chen Z."/>
            <person name="Zhao G.-P."/>
            <person name="Tang J.-L."/>
            <person name="He C."/>
        </authorList>
    </citation>
    <scope>NUCLEOTIDE SEQUENCE [LARGE SCALE GENOMIC DNA]</scope>
    <source>
        <strain>8004</strain>
    </source>
</reference>
<keyword id="KW-0067">ATP-binding</keyword>
<keyword id="KW-0963">Cytoplasm</keyword>
<keyword id="KW-0275">Fatty acid biosynthesis</keyword>
<keyword id="KW-0276">Fatty acid metabolism</keyword>
<keyword id="KW-0444">Lipid biosynthesis</keyword>
<keyword id="KW-0443">Lipid metabolism</keyword>
<keyword id="KW-0547">Nucleotide-binding</keyword>
<keyword id="KW-0808">Transferase</keyword>
<comment type="function">
    <text evidence="1">Component of the acetyl coenzyme A carboxylase (ACC) complex. First, biotin carboxylase catalyzes the carboxylation of biotin on its carrier protein (BCCP) and then the CO(2) group is transferred by the carboxyltransferase to acetyl-CoA to form malonyl-CoA.</text>
</comment>
<comment type="catalytic activity">
    <reaction evidence="1">
        <text>N(6)-carboxybiotinyl-L-lysyl-[protein] + acetyl-CoA = N(6)-biotinyl-L-lysyl-[protein] + malonyl-CoA</text>
        <dbReference type="Rhea" id="RHEA:54728"/>
        <dbReference type="Rhea" id="RHEA-COMP:10505"/>
        <dbReference type="Rhea" id="RHEA-COMP:10506"/>
        <dbReference type="ChEBI" id="CHEBI:57288"/>
        <dbReference type="ChEBI" id="CHEBI:57384"/>
        <dbReference type="ChEBI" id="CHEBI:83144"/>
        <dbReference type="ChEBI" id="CHEBI:83145"/>
        <dbReference type="EC" id="2.1.3.15"/>
    </reaction>
</comment>
<comment type="pathway">
    <text evidence="1">Lipid metabolism; malonyl-CoA biosynthesis; malonyl-CoA from acetyl-CoA: step 1/1.</text>
</comment>
<comment type="subunit">
    <text evidence="1">Acetyl-CoA carboxylase is a heterohexamer composed of biotin carboxyl carrier protein (AccB), biotin carboxylase (AccC) and two subunits each of ACCase subunit alpha (AccA) and ACCase subunit beta (AccD).</text>
</comment>
<comment type="subcellular location">
    <subcellularLocation>
        <location evidence="1">Cytoplasm</location>
    </subcellularLocation>
</comment>
<comment type="similarity">
    <text evidence="1">Belongs to the AccA family.</text>
</comment>
<protein>
    <recommendedName>
        <fullName evidence="1">Acetyl-coenzyme A carboxylase carboxyl transferase subunit alpha</fullName>
        <shortName evidence="1">ACCase subunit alpha</shortName>
        <shortName evidence="1">Acetyl-CoA carboxylase carboxyltransferase subunit alpha</shortName>
        <ecNumber evidence="1">2.1.3.15</ecNumber>
    </recommendedName>
</protein>
<organism>
    <name type="scientific">Xanthomonas campestris pv. campestris (strain 8004)</name>
    <dbReference type="NCBI Taxonomy" id="314565"/>
    <lineage>
        <taxon>Bacteria</taxon>
        <taxon>Pseudomonadati</taxon>
        <taxon>Pseudomonadota</taxon>
        <taxon>Gammaproteobacteria</taxon>
        <taxon>Lysobacterales</taxon>
        <taxon>Lysobacteraceae</taxon>
        <taxon>Xanthomonas</taxon>
    </lineage>
</organism>